<organism>
    <name type="scientific">Methanopyrus kandleri (strain AV19 / DSM 6324 / JCM 9639 / NBRC 100938)</name>
    <dbReference type="NCBI Taxonomy" id="190192"/>
    <lineage>
        <taxon>Archaea</taxon>
        <taxon>Methanobacteriati</taxon>
        <taxon>Methanobacteriota</taxon>
        <taxon>Methanomada group</taxon>
        <taxon>Methanopyri</taxon>
        <taxon>Methanopyrales</taxon>
        <taxon>Methanopyraceae</taxon>
        <taxon>Methanopyrus</taxon>
    </lineage>
</organism>
<protein>
    <recommendedName>
        <fullName evidence="1">Phosphoglycerate kinase</fullName>
        <ecNumber evidence="1">2.7.2.3</ecNumber>
    </recommendedName>
</protein>
<gene>
    <name evidence="1" type="primary">pgk</name>
    <name type="ordered locus">MK1662</name>
</gene>
<dbReference type="EC" id="2.7.2.3" evidence="1"/>
<dbReference type="EMBL" id="AE009439">
    <property type="protein sequence ID" value="AAM02875.1"/>
    <property type="molecule type" value="Genomic_DNA"/>
</dbReference>
<dbReference type="RefSeq" id="WP_011020030.1">
    <property type="nucleotide sequence ID" value="NC_003551.1"/>
</dbReference>
<dbReference type="SMR" id="Q8TUU1"/>
<dbReference type="FunCoup" id="Q8TUU1">
    <property type="interactions" value="179"/>
</dbReference>
<dbReference type="STRING" id="190192.MK1662"/>
<dbReference type="PaxDb" id="190192-MK1662"/>
<dbReference type="EnsemblBacteria" id="AAM02875">
    <property type="protein sequence ID" value="AAM02875"/>
    <property type="gene ID" value="MK1662"/>
</dbReference>
<dbReference type="GeneID" id="1478257"/>
<dbReference type="KEGG" id="mka:MK1662"/>
<dbReference type="PATRIC" id="fig|190192.8.peg.1826"/>
<dbReference type="HOGENOM" id="CLU_025427_0_2_2"/>
<dbReference type="InParanoid" id="Q8TUU1"/>
<dbReference type="OrthoDB" id="6575at2157"/>
<dbReference type="UniPathway" id="UPA00109">
    <property type="reaction ID" value="UER00185"/>
</dbReference>
<dbReference type="Proteomes" id="UP000001826">
    <property type="component" value="Chromosome"/>
</dbReference>
<dbReference type="GO" id="GO:0005829">
    <property type="term" value="C:cytosol"/>
    <property type="evidence" value="ECO:0007669"/>
    <property type="project" value="TreeGrafter"/>
</dbReference>
<dbReference type="GO" id="GO:0043531">
    <property type="term" value="F:ADP binding"/>
    <property type="evidence" value="ECO:0007669"/>
    <property type="project" value="TreeGrafter"/>
</dbReference>
<dbReference type="GO" id="GO:0005524">
    <property type="term" value="F:ATP binding"/>
    <property type="evidence" value="ECO:0007669"/>
    <property type="project" value="UniProtKB-KW"/>
</dbReference>
<dbReference type="GO" id="GO:0004618">
    <property type="term" value="F:phosphoglycerate kinase activity"/>
    <property type="evidence" value="ECO:0007669"/>
    <property type="project" value="UniProtKB-UniRule"/>
</dbReference>
<dbReference type="GO" id="GO:0006094">
    <property type="term" value="P:gluconeogenesis"/>
    <property type="evidence" value="ECO:0007669"/>
    <property type="project" value="TreeGrafter"/>
</dbReference>
<dbReference type="GO" id="GO:0006096">
    <property type="term" value="P:glycolytic process"/>
    <property type="evidence" value="ECO:0007669"/>
    <property type="project" value="UniProtKB-UniRule"/>
</dbReference>
<dbReference type="FunFam" id="3.40.50.1260:FF:000006">
    <property type="entry name" value="Phosphoglycerate kinase"/>
    <property type="match status" value="1"/>
</dbReference>
<dbReference type="FunFam" id="3.40.50.1260:FF:000012">
    <property type="entry name" value="Phosphoglycerate kinase"/>
    <property type="match status" value="1"/>
</dbReference>
<dbReference type="Gene3D" id="3.40.50.1260">
    <property type="entry name" value="Phosphoglycerate kinase, N-terminal domain"/>
    <property type="match status" value="2"/>
</dbReference>
<dbReference type="HAMAP" id="MF_00145">
    <property type="entry name" value="Phosphoglyc_kinase"/>
    <property type="match status" value="1"/>
</dbReference>
<dbReference type="InterPro" id="IPR001576">
    <property type="entry name" value="Phosphoglycerate_kinase"/>
</dbReference>
<dbReference type="InterPro" id="IPR015824">
    <property type="entry name" value="Phosphoglycerate_kinase_N"/>
</dbReference>
<dbReference type="InterPro" id="IPR036043">
    <property type="entry name" value="Phosphoglycerate_kinase_sf"/>
</dbReference>
<dbReference type="PANTHER" id="PTHR11406">
    <property type="entry name" value="PHOSPHOGLYCERATE KINASE"/>
    <property type="match status" value="1"/>
</dbReference>
<dbReference type="PANTHER" id="PTHR11406:SF23">
    <property type="entry name" value="PHOSPHOGLYCERATE KINASE 1, CHLOROPLASTIC-RELATED"/>
    <property type="match status" value="1"/>
</dbReference>
<dbReference type="Pfam" id="PF00162">
    <property type="entry name" value="PGK"/>
    <property type="match status" value="1"/>
</dbReference>
<dbReference type="PIRSF" id="PIRSF000724">
    <property type="entry name" value="Pgk"/>
    <property type="match status" value="1"/>
</dbReference>
<dbReference type="PRINTS" id="PR00477">
    <property type="entry name" value="PHGLYCKINASE"/>
</dbReference>
<dbReference type="SUPFAM" id="SSF53748">
    <property type="entry name" value="Phosphoglycerate kinase"/>
    <property type="match status" value="1"/>
</dbReference>
<sequence length="406" mass="45132">MYENISTMDDFEFENKWVLLRIDINSTVIDGKIEDDERIKRHLGTIKELMEHDARVAILAHQGRPGEDDFTTLEPHAEIMSEELDNFEYVPDVFGPTAKKKIRSLEPGEVILLENVRFYSEERINRDPEWHARRHLVRNLAPLFDIFVNDAFAAAHRSNASLVGFTRRLPSCVGRVMEREIEVLETMVRDEMEDGVFVIGGSKIEDAIKVIRRAIEMDNVRRVLLGGLVGNLFLWASGVDLGKPSRKFLDMKGYTGYLDEARELLEEGDDVILVPEDVALNRGGEREEVDVDELPADAPVFDIGTGTIERYRKEVESAGMVVANGPMGVYEEPGFEKGTYEVLNAIADSEAFSVIGGGHIIAAAKACGAYDSIDHVSTGGGAMLRMLAGERLPAIDAILTCPFSGC</sequence>
<accession>Q8TUU1</accession>
<reference key="1">
    <citation type="journal article" date="2002" name="Proc. Natl. Acad. Sci. U.S.A.">
        <title>The complete genome of hyperthermophile Methanopyrus kandleri AV19 and monophyly of archaeal methanogens.</title>
        <authorList>
            <person name="Slesarev A.I."/>
            <person name="Mezhevaya K.V."/>
            <person name="Makarova K.S."/>
            <person name="Polushin N.N."/>
            <person name="Shcherbinina O.V."/>
            <person name="Shakhova V.V."/>
            <person name="Belova G.I."/>
            <person name="Aravind L."/>
            <person name="Natale D.A."/>
            <person name="Rogozin I.B."/>
            <person name="Tatusov R.L."/>
            <person name="Wolf Y.I."/>
            <person name="Stetter K.O."/>
            <person name="Malykh A.G."/>
            <person name="Koonin E.V."/>
            <person name="Kozyavkin S.A."/>
        </authorList>
    </citation>
    <scope>NUCLEOTIDE SEQUENCE [LARGE SCALE GENOMIC DNA]</scope>
    <source>
        <strain>AV19 / DSM 6324 / JCM 9639 / NBRC 100938</strain>
    </source>
</reference>
<keyword id="KW-0067">ATP-binding</keyword>
<keyword id="KW-0963">Cytoplasm</keyword>
<keyword id="KW-0324">Glycolysis</keyword>
<keyword id="KW-0418">Kinase</keyword>
<keyword id="KW-0547">Nucleotide-binding</keyword>
<keyword id="KW-1185">Reference proteome</keyword>
<keyword id="KW-0808">Transferase</keyword>
<evidence type="ECO:0000255" key="1">
    <source>
        <dbReference type="HAMAP-Rule" id="MF_00145"/>
    </source>
</evidence>
<comment type="catalytic activity">
    <reaction evidence="1">
        <text>(2R)-3-phosphoglycerate + ATP = (2R)-3-phospho-glyceroyl phosphate + ADP</text>
        <dbReference type="Rhea" id="RHEA:14801"/>
        <dbReference type="ChEBI" id="CHEBI:30616"/>
        <dbReference type="ChEBI" id="CHEBI:57604"/>
        <dbReference type="ChEBI" id="CHEBI:58272"/>
        <dbReference type="ChEBI" id="CHEBI:456216"/>
        <dbReference type="EC" id="2.7.2.3"/>
    </reaction>
</comment>
<comment type="pathway">
    <text evidence="1">Carbohydrate degradation; glycolysis; pyruvate from D-glyceraldehyde 3-phosphate: step 2/5.</text>
</comment>
<comment type="subunit">
    <text evidence="1">Monomer.</text>
</comment>
<comment type="subcellular location">
    <subcellularLocation>
        <location evidence="1">Cytoplasm</location>
    </subcellularLocation>
</comment>
<comment type="similarity">
    <text evidence="1">Belongs to the phosphoglycerate kinase family.</text>
</comment>
<name>PGK_METKA</name>
<feature type="chain" id="PRO_0000146059" description="Phosphoglycerate kinase">
    <location>
        <begin position="1"/>
        <end position="406"/>
    </location>
</feature>
<feature type="binding site" evidence="1">
    <location>
        <begin position="23"/>
        <end position="25"/>
    </location>
    <ligand>
        <name>substrate</name>
    </ligand>
</feature>
<feature type="binding site" evidence="1">
    <location>
        <position position="38"/>
    </location>
    <ligand>
        <name>substrate</name>
    </ligand>
</feature>
<feature type="binding site" evidence="1">
    <location>
        <begin position="61"/>
        <end position="64"/>
    </location>
    <ligand>
        <name>substrate</name>
    </ligand>
</feature>
<feature type="binding site" evidence="1">
    <location>
        <position position="117"/>
    </location>
    <ligand>
        <name>substrate</name>
    </ligand>
</feature>
<feature type="binding site" evidence="1">
    <location>
        <position position="157"/>
    </location>
    <ligand>
        <name>substrate</name>
    </ligand>
</feature>
<feature type="binding site" evidence="1">
    <location>
        <position position="331"/>
    </location>
    <ligand>
        <name>ATP</name>
        <dbReference type="ChEBI" id="CHEBI:30616"/>
    </ligand>
</feature>
<feature type="binding site" evidence="1">
    <location>
        <begin position="357"/>
        <end position="360"/>
    </location>
    <ligand>
        <name>ATP</name>
        <dbReference type="ChEBI" id="CHEBI:30616"/>
    </ligand>
</feature>
<proteinExistence type="inferred from homology"/>